<proteinExistence type="inferred from homology"/>
<sequence length="217" mass="23125">MTAPLTLALSKGRIFEETLPLLAAAGVQVAEDPETSRKLILPTTDPNLRVIIVRASDVPTYVEYGAADFGVAGKDVLVEHGGSGLYQPIDLNIARCRMSVAVPAGFDYANAVRQGARLRVATKYVETAREHFAAKGVHVDLIKLYGSMELAPLVGLADAIVDLVSSGGTLKANNLVEVEEIMAISSRLVVNQAALKLKRAALKPFLDAFERASQNGV</sequence>
<accession>Q845V4</accession>
<accession>A9AE00</accession>
<gene>
    <name evidence="1" type="primary">hisG</name>
    <name type="ordered locus">Bmul_0327</name>
    <name type="ordered locus">BMULJ_02927</name>
</gene>
<reference key="1">
    <citation type="journal article" date="2003" name="J. Bacteriol.">
        <title>Distribution and organization of auxotrophic genes on the multichromosomal genome of Burkholderia multivorans ATCC 17616.</title>
        <authorList>
            <person name="Komatsu H."/>
            <person name="Imura Y."/>
            <person name="Ohori A."/>
            <person name="Nagata Y."/>
            <person name="Tsuda M."/>
        </authorList>
    </citation>
    <scope>NUCLEOTIDE SEQUENCE [GENOMIC DNA]</scope>
</reference>
<reference key="2">
    <citation type="submission" date="2007-10" db="EMBL/GenBank/DDBJ databases">
        <title>Complete sequence of chromosome 1 of Burkholderia multivorans ATCC 17616.</title>
        <authorList>
            <person name="Copeland A."/>
            <person name="Lucas S."/>
            <person name="Lapidus A."/>
            <person name="Barry K."/>
            <person name="Glavina del Rio T."/>
            <person name="Dalin E."/>
            <person name="Tice H."/>
            <person name="Pitluck S."/>
            <person name="Chain P."/>
            <person name="Malfatti S."/>
            <person name="Shin M."/>
            <person name="Vergez L."/>
            <person name="Schmutz J."/>
            <person name="Larimer F."/>
            <person name="Land M."/>
            <person name="Hauser L."/>
            <person name="Kyrpides N."/>
            <person name="Kim E."/>
            <person name="Tiedje J."/>
            <person name="Richardson P."/>
        </authorList>
    </citation>
    <scope>NUCLEOTIDE SEQUENCE [LARGE SCALE GENOMIC DNA]</scope>
    <source>
        <strain>ATCC 17616 / 249</strain>
    </source>
</reference>
<reference key="3">
    <citation type="submission" date="2007-04" db="EMBL/GenBank/DDBJ databases">
        <title>Complete genome sequence of Burkholderia multivorans ATCC 17616.</title>
        <authorList>
            <person name="Ohtsubo Y."/>
            <person name="Yamashita A."/>
            <person name="Kurokawa K."/>
            <person name="Takami H."/>
            <person name="Yuhara S."/>
            <person name="Nishiyama E."/>
            <person name="Endo R."/>
            <person name="Miyazaki R."/>
            <person name="Ono A."/>
            <person name="Yano K."/>
            <person name="Ito M."/>
            <person name="Sota M."/>
            <person name="Yuji N."/>
            <person name="Hattori M."/>
            <person name="Tsuda M."/>
        </authorList>
    </citation>
    <scope>NUCLEOTIDE SEQUENCE [LARGE SCALE GENOMIC DNA]</scope>
    <source>
        <strain>ATCC 17616 / 249</strain>
    </source>
</reference>
<evidence type="ECO:0000255" key="1">
    <source>
        <dbReference type="HAMAP-Rule" id="MF_01018"/>
    </source>
</evidence>
<comment type="function">
    <text evidence="1">Catalyzes the condensation of ATP and 5-phosphoribose 1-diphosphate to form N'-(5'-phosphoribosyl)-ATP (PR-ATP). Has a crucial role in the pathway because the rate of histidine biosynthesis seems to be controlled primarily by regulation of HisG enzymatic activity.</text>
</comment>
<comment type="catalytic activity">
    <reaction evidence="1">
        <text>1-(5-phospho-beta-D-ribosyl)-ATP + diphosphate = 5-phospho-alpha-D-ribose 1-diphosphate + ATP</text>
        <dbReference type="Rhea" id="RHEA:18473"/>
        <dbReference type="ChEBI" id="CHEBI:30616"/>
        <dbReference type="ChEBI" id="CHEBI:33019"/>
        <dbReference type="ChEBI" id="CHEBI:58017"/>
        <dbReference type="ChEBI" id="CHEBI:73183"/>
        <dbReference type="EC" id="2.4.2.17"/>
    </reaction>
</comment>
<comment type="pathway">
    <text evidence="1">Amino-acid biosynthesis; L-histidine biosynthesis; L-histidine from 5-phospho-alpha-D-ribose 1-diphosphate: step 1/9.</text>
</comment>
<comment type="subunit">
    <text evidence="1">Heteromultimer composed of HisG and HisZ subunits.</text>
</comment>
<comment type="subcellular location">
    <subcellularLocation>
        <location evidence="1">Cytoplasm</location>
    </subcellularLocation>
</comment>
<comment type="domain">
    <text>Lacks the C-terminal regulatory region which is replaced by HisZ.</text>
</comment>
<comment type="similarity">
    <text evidence="1">Belongs to the ATP phosphoribosyltransferase family. Short subfamily.</text>
</comment>
<protein>
    <recommendedName>
        <fullName evidence="1">ATP phosphoribosyltransferase</fullName>
        <shortName evidence="1">ATP-PRT</shortName>
        <shortName evidence="1">ATP-PRTase</shortName>
        <ecNumber evidence="1">2.4.2.17</ecNumber>
    </recommendedName>
</protein>
<organism>
    <name type="scientific">Burkholderia multivorans (strain ATCC 17616 / 249)</name>
    <dbReference type="NCBI Taxonomy" id="395019"/>
    <lineage>
        <taxon>Bacteria</taxon>
        <taxon>Pseudomonadati</taxon>
        <taxon>Pseudomonadota</taxon>
        <taxon>Betaproteobacteria</taxon>
        <taxon>Burkholderiales</taxon>
        <taxon>Burkholderiaceae</taxon>
        <taxon>Burkholderia</taxon>
        <taxon>Burkholderia cepacia complex</taxon>
    </lineage>
</organism>
<keyword id="KW-0028">Amino-acid biosynthesis</keyword>
<keyword id="KW-0067">ATP-binding</keyword>
<keyword id="KW-0963">Cytoplasm</keyword>
<keyword id="KW-0328">Glycosyltransferase</keyword>
<keyword id="KW-0368">Histidine biosynthesis</keyword>
<keyword id="KW-0547">Nucleotide-binding</keyword>
<keyword id="KW-1185">Reference proteome</keyword>
<keyword id="KW-0808">Transferase</keyword>
<dbReference type="EC" id="2.4.2.17" evidence="1"/>
<dbReference type="EMBL" id="AB091436">
    <property type="protein sequence ID" value="BAC65269.1"/>
    <property type="molecule type" value="Genomic_DNA"/>
</dbReference>
<dbReference type="EMBL" id="CP000868">
    <property type="protein sequence ID" value="ABX14022.1"/>
    <property type="molecule type" value="Genomic_DNA"/>
</dbReference>
<dbReference type="EMBL" id="AP009385">
    <property type="protein sequence ID" value="BAG44812.1"/>
    <property type="molecule type" value="Genomic_DNA"/>
</dbReference>
<dbReference type="RefSeq" id="WP_006400585.1">
    <property type="nucleotide sequence ID" value="NC_010804.1"/>
</dbReference>
<dbReference type="SMR" id="Q845V4"/>
<dbReference type="STRING" id="395019.BMULJ_02927"/>
<dbReference type="GeneID" id="89568717"/>
<dbReference type="KEGG" id="bmj:BMULJ_02927"/>
<dbReference type="KEGG" id="bmu:Bmul_0327"/>
<dbReference type="eggNOG" id="COG0040">
    <property type="taxonomic scope" value="Bacteria"/>
</dbReference>
<dbReference type="HOGENOM" id="CLU_038115_2_0_4"/>
<dbReference type="UniPathway" id="UPA00031">
    <property type="reaction ID" value="UER00006"/>
</dbReference>
<dbReference type="Proteomes" id="UP000008815">
    <property type="component" value="Chromosome 1"/>
</dbReference>
<dbReference type="GO" id="GO:0005737">
    <property type="term" value="C:cytoplasm"/>
    <property type="evidence" value="ECO:0007669"/>
    <property type="project" value="UniProtKB-SubCell"/>
</dbReference>
<dbReference type="GO" id="GO:0005524">
    <property type="term" value="F:ATP binding"/>
    <property type="evidence" value="ECO:0007669"/>
    <property type="project" value="UniProtKB-KW"/>
</dbReference>
<dbReference type="GO" id="GO:0003879">
    <property type="term" value="F:ATP phosphoribosyltransferase activity"/>
    <property type="evidence" value="ECO:0007669"/>
    <property type="project" value="UniProtKB-UniRule"/>
</dbReference>
<dbReference type="GO" id="GO:0000105">
    <property type="term" value="P:L-histidine biosynthetic process"/>
    <property type="evidence" value="ECO:0007669"/>
    <property type="project" value="UniProtKB-UniRule"/>
</dbReference>
<dbReference type="CDD" id="cd13595">
    <property type="entry name" value="PBP2_HisGs"/>
    <property type="match status" value="1"/>
</dbReference>
<dbReference type="FunFam" id="3.40.190.10:FF:000011">
    <property type="entry name" value="ATP phosphoribosyltransferase"/>
    <property type="match status" value="1"/>
</dbReference>
<dbReference type="Gene3D" id="3.40.190.10">
    <property type="entry name" value="Periplasmic binding protein-like II"/>
    <property type="match status" value="2"/>
</dbReference>
<dbReference type="HAMAP" id="MF_01018">
    <property type="entry name" value="HisG_Short"/>
    <property type="match status" value="1"/>
</dbReference>
<dbReference type="InterPro" id="IPR013820">
    <property type="entry name" value="ATP_PRibTrfase_cat"/>
</dbReference>
<dbReference type="InterPro" id="IPR018198">
    <property type="entry name" value="ATP_PRibTrfase_CS"/>
</dbReference>
<dbReference type="InterPro" id="IPR001348">
    <property type="entry name" value="ATP_PRibTrfase_HisG"/>
</dbReference>
<dbReference type="InterPro" id="IPR024893">
    <property type="entry name" value="ATP_PRibTrfase_HisG_short"/>
</dbReference>
<dbReference type="NCBIfam" id="TIGR00070">
    <property type="entry name" value="hisG"/>
    <property type="match status" value="1"/>
</dbReference>
<dbReference type="PANTHER" id="PTHR21403:SF8">
    <property type="entry name" value="ATP PHOSPHORIBOSYLTRANSFERASE"/>
    <property type="match status" value="1"/>
</dbReference>
<dbReference type="PANTHER" id="PTHR21403">
    <property type="entry name" value="ATP PHOSPHORIBOSYLTRANSFERASE ATP-PRTASE"/>
    <property type="match status" value="1"/>
</dbReference>
<dbReference type="Pfam" id="PF01634">
    <property type="entry name" value="HisG"/>
    <property type="match status" value="1"/>
</dbReference>
<dbReference type="SUPFAM" id="SSF53850">
    <property type="entry name" value="Periplasmic binding protein-like II"/>
    <property type="match status" value="1"/>
</dbReference>
<dbReference type="PROSITE" id="PS01316">
    <property type="entry name" value="ATP_P_PHORIBOSYLTR"/>
    <property type="match status" value="1"/>
</dbReference>
<feature type="chain" id="PRO_0000151904" description="ATP phosphoribosyltransferase">
    <location>
        <begin position="1"/>
        <end position="217"/>
    </location>
</feature>
<name>HIS1_BURM1</name>